<keyword id="KW-0418">Kinase</keyword>
<keyword id="KW-0547">Nucleotide-binding</keyword>
<keyword id="KW-1185">Reference proteome</keyword>
<keyword id="KW-0723">Serine/threonine-protein kinase</keyword>
<keyword id="KW-0808">Transferase</keyword>
<protein>
    <recommendedName>
        <fullName evidence="1">Putative pyruvate, phosphate dikinase regulatory protein 1</fullName>
        <shortName evidence="1">PPDK regulatory protein 1</shortName>
        <ecNumber evidence="1">2.7.11.32</ecNumber>
        <ecNumber evidence="1">2.7.4.27</ecNumber>
    </recommendedName>
</protein>
<organism>
    <name type="scientific">Listeria monocytogenes serovar 1/2a (strain ATCC BAA-679 / EGD-e)</name>
    <dbReference type="NCBI Taxonomy" id="169963"/>
    <lineage>
        <taxon>Bacteria</taxon>
        <taxon>Bacillati</taxon>
        <taxon>Bacillota</taxon>
        <taxon>Bacilli</taxon>
        <taxon>Bacillales</taxon>
        <taxon>Listeriaceae</taxon>
        <taxon>Listeria</taxon>
    </lineage>
</organism>
<proteinExistence type="inferred from homology"/>
<accession>P67195</accession>
<accession>Q92BQ3</accession>
<dbReference type="EC" id="2.7.11.32" evidence="1"/>
<dbReference type="EC" id="2.7.4.27" evidence="1"/>
<dbReference type="EMBL" id="AL591979">
    <property type="protein sequence ID" value="CAC99535.1"/>
    <property type="molecule type" value="Genomic_DNA"/>
</dbReference>
<dbReference type="PIR" id="AI1256">
    <property type="entry name" value="AI1256"/>
</dbReference>
<dbReference type="RefSeq" id="NP_464982.1">
    <property type="nucleotide sequence ID" value="NC_003210.1"/>
</dbReference>
<dbReference type="RefSeq" id="WP_003721963.1">
    <property type="nucleotide sequence ID" value="NZ_CP149495.1"/>
</dbReference>
<dbReference type="SMR" id="P67195"/>
<dbReference type="STRING" id="169963.gene:17594114"/>
<dbReference type="PaxDb" id="169963-lmo1457"/>
<dbReference type="EnsemblBacteria" id="CAC99535">
    <property type="protein sequence ID" value="CAC99535"/>
    <property type="gene ID" value="CAC99535"/>
</dbReference>
<dbReference type="GeneID" id="987875"/>
<dbReference type="KEGG" id="lmo:lmo1457"/>
<dbReference type="PATRIC" id="fig|169963.11.peg.1496"/>
<dbReference type="eggNOG" id="COG1806">
    <property type="taxonomic scope" value="Bacteria"/>
</dbReference>
<dbReference type="HOGENOM" id="CLU_046206_2_1_9"/>
<dbReference type="OrthoDB" id="9782201at2"/>
<dbReference type="PhylomeDB" id="P67195"/>
<dbReference type="BioCyc" id="LMON169963:LMO1457-MONOMER"/>
<dbReference type="Proteomes" id="UP000000817">
    <property type="component" value="Chromosome"/>
</dbReference>
<dbReference type="GO" id="GO:0043531">
    <property type="term" value="F:ADP binding"/>
    <property type="evidence" value="ECO:0007669"/>
    <property type="project" value="UniProtKB-UniRule"/>
</dbReference>
<dbReference type="GO" id="GO:0005524">
    <property type="term" value="F:ATP binding"/>
    <property type="evidence" value="ECO:0007669"/>
    <property type="project" value="InterPro"/>
</dbReference>
<dbReference type="GO" id="GO:0016776">
    <property type="term" value="F:phosphotransferase activity, phosphate group as acceptor"/>
    <property type="evidence" value="ECO:0007669"/>
    <property type="project" value="UniProtKB-UniRule"/>
</dbReference>
<dbReference type="GO" id="GO:0004674">
    <property type="term" value="F:protein serine/threonine kinase activity"/>
    <property type="evidence" value="ECO:0007669"/>
    <property type="project" value="UniProtKB-UniRule"/>
</dbReference>
<dbReference type="HAMAP" id="MF_00921">
    <property type="entry name" value="PDRP"/>
    <property type="match status" value="1"/>
</dbReference>
<dbReference type="InterPro" id="IPR005177">
    <property type="entry name" value="Kinase-pyrophosphorylase"/>
</dbReference>
<dbReference type="InterPro" id="IPR026565">
    <property type="entry name" value="PPDK_reg"/>
</dbReference>
<dbReference type="NCBIfam" id="NF003742">
    <property type="entry name" value="PRK05339.1"/>
    <property type="match status" value="1"/>
</dbReference>
<dbReference type="PANTHER" id="PTHR31756">
    <property type="entry name" value="PYRUVATE, PHOSPHATE DIKINASE REGULATORY PROTEIN 1, CHLOROPLASTIC"/>
    <property type="match status" value="1"/>
</dbReference>
<dbReference type="PANTHER" id="PTHR31756:SF3">
    <property type="entry name" value="PYRUVATE, PHOSPHATE DIKINASE REGULATORY PROTEIN 1, CHLOROPLASTIC"/>
    <property type="match status" value="1"/>
</dbReference>
<dbReference type="Pfam" id="PF03618">
    <property type="entry name" value="Kinase-PPPase"/>
    <property type="match status" value="1"/>
</dbReference>
<gene>
    <name type="ordered locus">lmo1457</name>
</gene>
<sequence length="274" mass="30436">MTQPAVYVVSDSTGETAELVTRAALSQFGQTPKFIHRFHHVDSSHMIEEIVDLVAVNNGIIVHTIVLESVREELNKTAQAFGVPIIDLFGPLLNQLEETYKIKPLSEPGRVRSMDEAYFNKVAAIEFAVENDDGRNPRGILQADYVLIGISRTSKTPLSQYLALKGLKIVNIPIVPEAQIPDELFEIDPKKIIGLKISKQKLTKIRQERLISIGLPGAGTYASNQRIDEELAIFNKLASKLNCFVLDVTNKAIEETANEILIHIGEIVDENLEL</sequence>
<evidence type="ECO:0000255" key="1">
    <source>
        <dbReference type="HAMAP-Rule" id="MF_00921"/>
    </source>
</evidence>
<feature type="chain" id="PRO_0000196674" description="Putative pyruvate, phosphate dikinase regulatory protein 1">
    <location>
        <begin position="1"/>
        <end position="274"/>
    </location>
</feature>
<feature type="binding site" evidence="1">
    <location>
        <begin position="149"/>
        <end position="156"/>
    </location>
    <ligand>
        <name>ADP</name>
        <dbReference type="ChEBI" id="CHEBI:456216"/>
    </ligand>
</feature>
<reference key="1">
    <citation type="journal article" date="2001" name="Science">
        <title>Comparative genomics of Listeria species.</title>
        <authorList>
            <person name="Glaser P."/>
            <person name="Frangeul L."/>
            <person name="Buchrieser C."/>
            <person name="Rusniok C."/>
            <person name="Amend A."/>
            <person name="Baquero F."/>
            <person name="Berche P."/>
            <person name="Bloecker H."/>
            <person name="Brandt P."/>
            <person name="Chakraborty T."/>
            <person name="Charbit A."/>
            <person name="Chetouani F."/>
            <person name="Couve E."/>
            <person name="de Daruvar A."/>
            <person name="Dehoux P."/>
            <person name="Domann E."/>
            <person name="Dominguez-Bernal G."/>
            <person name="Duchaud E."/>
            <person name="Durant L."/>
            <person name="Dussurget O."/>
            <person name="Entian K.-D."/>
            <person name="Fsihi H."/>
            <person name="Garcia-del Portillo F."/>
            <person name="Garrido P."/>
            <person name="Gautier L."/>
            <person name="Goebel W."/>
            <person name="Gomez-Lopez N."/>
            <person name="Hain T."/>
            <person name="Hauf J."/>
            <person name="Jackson D."/>
            <person name="Jones L.-M."/>
            <person name="Kaerst U."/>
            <person name="Kreft J."/>
            <person name="Kuhn M."/>
            <person name="Kunst F."/>
            <person name="Kurapkat G."/>
            <person name="Madueno E."/>
            <person name="Maitournam A."/>
            <person name="Mata Vicente J."/>
            <person name="Ng E."/>
            <person name="Nedjari H."/>
            <person name="Nordsiek G."/>
            <person name="Novella S."/>
            <person name="de Pablos B."/>
            <person name="Perez-Diaz J.-C."/>
            <person name="Purcell R."/>
            <person name="Remmel B."/>
            <person name="Rose M."/>
            <person name="Schlueter T."/>
            <person name="Simoes N."/>
            <person name="Tierrez A."/>
            <person name="Vazquez-Boland J.-A."/>
            <person name="Voss H."/>
            <person name="Wehland J."/>
            <person name="Cossart P."/>
        </authorList>
    </citation>
    <scope>NUCLEOTIDE SEQUENCE [LARGE SCALE GENOMIC DNA]</scope>
    <source>
        <strain>ATCC BAA-679 / EGD-e</strain>
    </source>
</reference>
<comment type="function">
    <text evidence="1">Bifunctional serine/threonine kinase and phosphorylase involved in the regulation of the pyruvate, phosphate dikinase (PPDK) by catalyzing its phosphorylation/dephosphorylation.</text>
</comment>
<comment type="catalytic activity">
    <reaction evidence="1">
        <text>N(tele)-phospho-L-histidyl/L-threonyl-[pyruvate, phosphate dikinase] + ADP = N(tele)-phospho-L-histidyl/O-phospho-L-threonyl-[pyruvate, phosphate dikinase] + AMP + H(+)</text>
        <dbReference type="Rhea" id="RHEA:43692"/>
        <dbReference type="Rhea" id="RHEA-COMP:10650"/>
        <dbReference type="Rhea" id="RHEA-COMP:10651"/>
        <dbReference type="ChEBI" id="CHEBI:15378"/>
        <dbReference type="ChEBI" id="CHEBI:30013"/>
        <dbReference type="ChEBI" id="CHEBI:61977"/>
        <dbReference type="ChEBI" id="CHEBI:83586"/>
        <dbReference type="ChEBI" id="CHEBI:456215"/>
        <dbReference type="ChEBI" id="CHEBI:456216"/>
        <dbReference type="EC" id="2.7.11.32"/>
    </reaction>
</comment>
<comment type="catalytic activity">
    <reaction evidence="1">
        <text>N(tele)-phospho-L-histidyl/O-phospho-L-threonyl-[pyruvate, phosphate dikinase] + phosphate + H(+) = N(tele)-phospho-L-histidyl/L-threonyl-[pyruvate, phosphate dikinase] + diphosphate</text>
        <dbReference type="Rhea" id="RHEA:43696"/>
        <dbReference type="Rhea" id="RHEA-COMP:10650"/>
        <dbReference type="Rhea" id="RHEA-COMP:10651"/>
        <dbReference type="ChEBI" id="CHEBI:15378"/>
        <dbReference type="ChEBI" id="CHEBI:30013"/>
        <dbReference type="ChEBI" id="CHEBI:33019"/>
        <dbReference type="ChEBI" id="CHEBI:43474"/>
        <dbReference type="ChEBI" id="CHEBI:61977"/>
        <dbReference type="ChEBI" id="CHEBI:83586"/>
        <dbReference type="EC" id="2.7.4.27"/>
    </reaction>
</comment>
<comment type="similarity">
    <text evidence="1">Belongs to the pyruvate, phosphate/water dikinase regulatory protein family. PDRP subfamily.</text>
</comment>
<name>PDRP1_LISMO</name>